<comment type="function">
    <text evidence="1">Catalyzes the hydrolysis of inorganic pyrophosphate (PPi) forming two phosphate ions.</text>
</comment>
<comment type="catalytic activity">
    <reaction evidence="1">
        <text>diphosphate + H2O = 2 phosphate + H(+)</text>
        <dbReference type="Rhea" id="RHEA:24576"/>
        <dbReference type="ChEBI" id="CHEBI:15377"/>
        <dbReference type="ChEBI" id="CHEBI:15378"/>
        <dbReference type="ChEBI" id="CHEBI:33019"/>
        <dbReference type="ChEBI" id="CHEBI:43474"/>
        <dbReference type="EC" id="3.6.1.1"/>
    </reaction>
</comment>
<comment type="cofactor">
    <cofactor evidence="1">
        <name>Mg(2+)</name>
        <dbReference type="ChEBI" id="CHEBI:18420"/>
    </cofactor>
</comment>
<comment type="subunit">
    <text evidence="1">Homohexamer.</text>
</comment>
<comment type="subcellular location">
    <subcellularLocation>
        <location evidence="1">Cytoplasm</location>
    </subcellularLocation>
</comment>
<comment type="similarity">
    <text evidence="1">Belongs to the PPase family.</text>
</comment>
<dbReference type="EC" id="3.6.1.1" evidence="1"/>
<dbReference type="EMBL" id="AE009439">
    <property type="protein sequence ID" value="AAM02663.1"/>
    <property type="molecule type" value="Genomic_DNA"/>
</dbReference>
<dbReference type="SMR" id="Q8TVE2"/>
<dbReference type="STRING" id="190192.MK1450"/>
<dbReference type="PaxDb" id="190192-MK1450"/>
<dbReference type="EnsemblBacteria" id="AAM02663">
    <property type="protein sequence ID" value="AAM02663"/>
    <property type="gene ID" value="MK1450"/>
</dbReference>
<dbReference type="KEGG" id="mka:MK1450"/>
<dbReference type="PATRIC" id="fig|190192.8.peg.1606"/>
<dbReference type="HOGENOM" id="CLU_073198_1_1_2"/>
<dbReference type="InParanoid" id="Q8TVE2"/>
<dbReference type="Proteomes" id="UP000001826">
    <property type="component" value="Chromosome"/>
</dbReference>
<dbReference type="GO" id="GO:0005737">
    <property type="term" value="C:cytoplasm"/>
    <property type="evidence" value="ECO:0007669"/>
    <property type="project" value="UniProtKB-SubCell"/>
</dbReference>
<dbReference type="GO" id="GO:0004427">
    <property type="term" value="F:inorganic diphosphate phosphatase activity"/>
    <property type="evidence" value="ECO:0007669"/>
    <property type="project" value="UniProtKB-UniRule"/>
</dbReference>
<dbReference type="GO" id="GO:0000287">
    <property type="term" value="F:magnesium ion binding"/>
    <property type="evidence" value="ECO:0007669"/>
    <property type="project" value="UniProtKB-UniRule"/>
</dbReference>
<dbReference type="GO" id="GO:0006796">
    <property type="term" value="P:phosphate-containing compound metabolic process"/>
    <property type="evidence" value="ECO:0007669"/>
    <property type="project" value="InterPro"/>
</dbReference>
<dbReference type="CDD" id="cd00412">
    <property type="entry name" value="pyrophosphatase"/>
    <property type="match status" value="1"/>
</dbReference>
<dbReference type="FunFam" id="3.90.80.10:FF:000003">
    <property type="entry name" value="Inorganic pyrophosphatase"/>
    <property type="match status" value="1"/>
</dbReference>
<dbReference type="Gene3D" id="3.90.80.10">
    <property type="entry name" value="Inorganic pyrophosphatase"/>
    <property type="match status" value="1"/>
</dbReference>
<dbReference type="HAMAP" id="MF_00209">
    <property type="entry name" value="Inorganic_PPase"/>
    <property type="match status" value="1"/>
</dbReference>
<dbReference type="InterPro" id="IPR008162">
    <property type="entry name" value="Pyrophosphatase"/>
</dbReference>
<dbReference type="InterPro" id="IPR036649">
    <property type="entry name" value="Pyrophosphatase_sf"/>
</dbReference>
<dbReference type="PANTHER" id="PTHR10286">
    <property type="entry name" value="INORGANIC PYROPHOSPHATASE"/>
    <property type="match status" value="1"/>
</dbReference>
<dbReference type="Pfam" id="PF00719">
    <property type="entry name" value="Pyrophosphatase"/>
    <property type="match status" value="1"/>
</dbReference>
<dbReference type="SUPFAM" id="SSF50324">
    <property type="entry name" value="Inorganic pyrophosphatase"/>
    <property type="match status" value="1"/>
</dbReference>
<dbReference type="PROSITE" id="PS00387">
    <property type="entry name" value="PPASE"/>
    <property type="match status" value="1"/>
</dbReference>
<organism>
    <name type="scientific">Methanopyrus kandleri (strain AV19 / DSM 6324 / JCM 9639 / NBRC 100938)</name>
    <dbReference type="NCBI Taxonomy" id="190192"/>
    <lineage>
        <taxon>Archaea</taxon>
        <taxon>Methanobacteriati</taxon>
        <taxon>Methanobacteriota</taxon>
        <taxon>Methanomada group</taxon>
        <taxon>Methanopyri</taxon>
        <taxon>Methanopyrales</taxon>
        <taxon>Methanopyraceae</taxon>
        <taxon>Methanopyrus</taxon>
    </lineage>
</organism>
<feature type="chain" id="PRO_0000137550" description="Inorganic pyrophosphatase">
    <location>
        <begin position="1"/>
        <end position="176"/>
    </location>
</feature>
<feature type="binding site" evidence="1">
    <location>
        <position position="31"/>
    </location>
    <ligand>
        <name>substrate</name>
    </ligand>
</feature>
<feature type="binding site" evidence="1">
    <location>
        <position position="45"/>
    </location>
    <ligand>
        <name>substrate</name>
    </ligand>
</feature>
<feature type="binding site" evidence="1">
    <location>
        <position position="57"/>
    </location>
    <ligand>
        <name>substrate</name>
    </ligand>
</feature>
<feature type="binding site" evidence="1">
    <location>
        <position position="67"/>
    </location>
    <ligand>
        <name>Mg(2+)</name>
        <dbReference type="ChEBI" id="CHEBI:18420"/>
        <label>1</label>
    </ligand>
</feature>
<feature type="binding site" evidence="1">
    <location>
        <position position="72"/>
    </location>
    <ligand>
        <name>Mg(2+)</name>
        <dbReference type="ChEBI" id="CHEBI:18420"/>
        <label>1</label>
    </ligand>
</feature>
<feature type="binding site" evidence="1">
    <location>
        <position position="72"/>
    </location>
    <ligand>
        <name>Mg(2+)</name>
        <dbReference type="ChEBI" id="CHEBI:18420"/>
        <label>2</label>
    </ligand>
</feature>
<feature type="binding site" evidence="1">
    <location>
        <position position="104"/>
    </location>
    <ligand>
        <name>Mg(2+)</name>
        <dbReference type="ChEBI" id="CHEBI:18420"/>
        <label>1</label>
    </ligand>
</feature>
<feature type="binding site" evidence="1">
    <location>
        <position position="141"/>
    </location>
    <ligand>
        <name>substrate</name>
    </ligand>
</feature>
<evidence type="ECO:0000255" key="1">
    <source>
        <dbReference type="HAMAP-Rule" id="MF_00209"/>
    </source>
</evidence>
<protein>
    <recommendedName>
        <fullName evidence="1">Inorganic pyrophosphatase</fullName>
        <ecNumber evidence="1">3.6.1.1</ecNumber>
    </recommendedName>
    <alternativeName>
        <fullName evidence="1">Pyrophosphate phospho-hydrolase</fullName>
        <shortName evidence="1">PPase</shortName>
    </alternativeName>
</protein>
<gene>
    <name evidence="1" type="primary">ppa</name>
    <name type="ordered locus">MK1450</name>
</gene>
<accession>Q8TVE2</accession>
<keyword id="KW-0963">Cytoplasm</keyword>
<keyword id="KW-0378">Hydrolase</keyword>
<keyword id="KW-0460">Magnesium</keyword>
<keyword id="KW-0479">Metal-binding</keyword>
<keyword id="KW-1185">Reference proteome</keyword>
<reference key="1">
    <citation type="journal article" date="2002" name="Proc. Natl. Acad. Sci. U.S.A.">
        <title>The complete genome of hyperthermophile Methanopyrus kandleri AV19 and monophyly of archaeal methanogens.</title>
        <authorList>
            <person name="Slesarev A.I."/>
            <person name="Mezhevaya K.V."/>
            <person name="Makarova K.S."/>
            <person name="Polushin N.N."/>
            <person name="Shcherbinina O.V."/>
            <person name="Shakhova V.V."/>
            <person name="Belova G.I."/>
            <person name="Aravind L."/>
            <person name="Natale D.A."/>
            <person name="Rogozin I.B."/>
            <person name="Tatusov R.L."/>
            <person name="Wolf Y.I."/>
            <person name="Stetter K.O."/>
            <person name="Malykh A.G."/>
            <person name="Koonin E.V."/>
            <person name="Kozyavkin S.A."/>
        </authorList>
    </citation>
    <scope>NUCLEOTIDE SEQUENCE [LARGE SCALE GENOMIC DNA]</scope>
    <source>
        <strain>AV19 / DSM 6324 / JCM 9639 / NBRC 100938</strain>
    </source>
</reference>
<name>IPYR_METKA</name>
<proteinExistence type="inferred from homology"/>
<sequence length="176" mass="20301">MMNLWKDLEPGPNPPDVVYAVIEIPRGSRNKYEYDEERGFFKLDRVLYSPFHYPLDYGFIPRTLYDDGDPLDILVIMQDPTFPGCVIEARPIGLMKMLDDSDQDDKVLAVPTEDPRFKDVKDLDDVPKHLLDEIAHMFSEYKRLEGKETEVLGWEGADAAKEAIVHAIELYEEEHG</sequence>